<comment type="function">
    <text evidence="1">Involved in the catabolism of homogentisate (2,5-dihydroxyphenylacetate or 2,5-OH-PhAc), a central intermediate in the degradation of phenylalanine and tyrosine. Catalyzes the oxidative ring cleavage of the aromatic ring of homogentisate to yield maleylacetoacetate.</text>
</comment>
<comment type="catalytic activity">
    <reaction evidence="1">
        <text>homogentisate + O2 = 4-maleylacetoacetate + H(+)</text>
        <dbReference type="Rhea" id="RHEA:15449"/>
        <dbReference type="ChEBI" id="CHEBI:15378"/>
        <dbReference type="ChEBI" id="CHEBI:15379"/>
        <dbReference type="ChEBI" id="CHEBI:16169"/>
        <dbReference type="ChEBI" id="CHEBI:17105"/>
        <dbReference type="EC" id="1.13.11.5"/>
    </reaction>
</comment>
<comment type="cofactor">
    <cofactor evidence="1">
        <name>Fe cation</name>
        <dbReference type="ChEBI" id="CHEBI:24875"/>
    </cofactor>
</comment>
<comment type="pathway">
    <text evidence="1">Amino-acid degradation; L-phenylalanine degradation; acetoacetate and fumarate from L-phenylalanine: step 4/6.</text>
</comment>
<comment type="subunit">
    <text evidence="1">Hexamer; dimer of trimers.</text>
</comment>
<comment type="similarity">
    <text evidence="1">Belongs to the homogentisate dioxygenase family.</text>
</comment>
<gene>
    <name evidence="1" type="primary">hmgA</name>
    <name type="ordered locus">Nham_0921</name>
</gene>
<sequence>MNTSFDPVAANSNSANVTPGYMSGFGNSFETEALPGALPIGRNSPQRCAYGLYAEQLSGSPFTAPRGANERSWLYRIRPSVRHSGHFVKIDAKLWRTAPCLEHDMPLAQLRWDPTPIPEDELTFVQSVRTMTTAGDAHTQTGMAAHIYLITRSMVDQHFYNADGEMLFVPQGGSLRFVTEFGVIDTEPGEIAVIPRGVKFRVEIPSGPARGYLCENYGGAFTLPERGPIGANCLANSRDFLTPVAAYEDDDKPTELFVKWGGALWSTALPHSPIDVVAWHGNYAPYKYDLRTFSPIGAIGFDHPDPSIFTVLTSPSEIAGTANIDFVIFPERWVVAENTFRPPWYHMNVMSEFMGLIYGVYDAKPQGFVPGGISLHNCMLPHGPDREAFDHASNTELKPVKLTGTLAFMFETRFPQRVTEYAATSDALQDDYADCWQGLERRFDPTRP</sequence>
<protein>
    <recommendedName>
        <fullName evidence="1">Homogentisate 1,2-dioxygenase</fullName>
        <shortName evidence="1">HGDO</shortName>
        <ecNumber evidence="1">1.13.11.5</ecNumber>
    </recommendedName>
    <alternativeName>
        <fullName evidence="1">Homogentisate oxygenase</fullName>
    </alternativeName>
    <alternativeName>
        <fullName evidence="1">Homogentisic acid oxidase</fullName>
    </alternativeName>
    <alternativeName>
        <fullName evidence="1">Homogentisicase</fullName>
    </alternativeName>
</protein>
<organism>
    <name type="scientific">Nitrobacter hamburgensis (strain DSM 10229 / NCIMB 13809 / X14)</name>
    <dbReference type="NCBI Taxonomy" id="323097"/>
    <lineage>
        <taxon>Bacteria</taxon>
        <taxon>Pseudomonadati</taxon>
        <taxon>Pseudomonadota</taxon>
        <taxon>Alphaproteobacteria</taxon>
        <taxon>Hyphomicrobiales</taxon>
        <taxon>Nitrobacteraceae</taxon>
        <taxon>Nitrobacter</taxon>
    </lineage>
</organism>
<evidence type="ECO:0000255" key="1">
    <source>
        <dbReference type="HAMAP-Rule" id="MF_00334"/>
    </source>
</evidence>
<proteinExistence type="inferred from homology"/>
<reference key="1">
    <citation type="submission" date="2006-03" db="EMBL/GenBank/DDBJ databases">
        <title>Complete sequence of chromosome of Nitrobacter hamburgensis X14.</title>
        <authorList>
            <consortium name="US DOE Joint Genome Institute"/>
            <person name="Copeland A."/>
            <person name="Lucas S."/>
            <person name="Lapidus A."/>
            <person name="Barry K."/>
            <person name="Detter J.C."/>
            <person name="Glavina del Rio T."/>
            <person name="Hammon N."/>
            <person name="Israni S."/>
            <person name="Dalin E."/>
            <person name="Tice H."/>
            <person name="Pitluck S."/>
            <person name="Chain P."/>
            <person name="Malfatti S."/>
            <person name="Shin M."/>
            <person name="Vergez L."/>
            <person name="Schmutz J."/>
            <person name="Larimer F."/>
            <person name="Land M."/>
            <person name="Hauser L."/>
            <person name="Kyrpides N."/>
            <person name="Ivanova N."/>
            <person name="Ward B."/>
            <person name="Arp D."/>
            <person name="Klotz M."/>
            <person name="Stein L."/>
            <person name="O'Mullan G."/>
            <person name="Starkenburg S."/>
            <person name="Sayavedra L."/>
            <person name="Poret-Peterson A.T."/>
            <person name="Gentry M.E."/>
            <person name="Bruce D."/>
            <person name="Richardson P."/>
        </authorList>
    </citation>
    <scope>NUCLEOTIDE SEQUENCE [LARGE SCALE GENOMIC DNA]</scope>
    <source>
        <strain>DSM 10229 / NCIMB 13809 / X14</strain>
    </source>
</reference>
<dbReference type="EC" id="1.13.11.5" evidence="1"/>
<dbReference type="EMBL" id="CP000319">
    <property type="protein sequence ID" value="ABE61779.1"/>
    <property type="molecule type" value="Genomic_DNA"/>
</dbReference>
<dbReference type="RefSeq" id="WP_011509475.1">
    <property type="nucleotide sequence ID" value="NC_007964.1"/>
</dbReference>
<dbReference type="SMR" id="Q1QPR8"/>
<dbReference type="STRING" id="323097.Nham_0921"/>
<dbReference type="KEGG" id="nha:Nham_0921"/>
<dbReference type="eggNOG" id="COG3508">
    <property type="taxonomic scope" value="Bacteria"/>
</dbReference>
<dbReference type="HOGENOM" id="CLU_027174_0_0_5"/>
<dbReference type="OrthoDB" id="9811253at2"/>
<dbReference type="UniPathway" id="UPA00139">
    <property type="reaction ID" value="UER00339"/>
</dbReference>
<dbReference type="Proteomes" id="UP000001953">
    <property type="component" value="Chromosome"/>
</dbReference>
<dbReference type="GO" id="GO:0005737">
    <property type="term" value="C:cytoplasm"/>
    <property type="evidence" value="ECO:0007669"/>
    <property type="project" value="TreeGrafter"/>
</dbReference>
<dbReference type="GO" id="GO:0004411">
    <property type="term" value="F:homogentisate 1,2-dioxygenase activity"/>
    <property type="evidence" value="ECO:0007669"/>
    <property type="project" value="UniProtKB-UniRule"/>
</dbReference>
<dbReference type="GO" id="GO:0005506">
    <property type="term" value="F:iron ion binding"/>
    <property type="evidence" value="ECO:0007669"/>
    <property type="project" value="UniProtKB-UniRule"/>
</dbReference>
<dbReference type="GO" id="GO:0006559">
    <property type="term" value="P:L-phenylalanine catabolic process"/>
    <property type="evidence" value="ECO:0007669"/>
    <property type="project" value="UniProtKB-UniRule"/>
</dbReference>
<dbReference type="GO" id="GO:0006572">
    <property type="term" value="P:tyrosine catabolic process"/>
    <property type="evidence" value="ECO:0007669"/>
    <property type="project" value="UniProtKB-UniRule"/>
</dbReference>
<dbReference type="CDD" id="cd07000">
    <property type="entry name" value="cupin_HGO_N"/>
    <property type="match status" value="1"/>
</dbReference>
<dbReference type="FunFam" id="2.60.120.10:FF:000053">
    <property type="entry name" value="Homogentisate 1,2-dioxygenase"/>
    <property type="match status" value="1"/>
</dbReference>
<dbReference type="Gene3D" id="2.60.120.10">
    <property type="entry name" value="Jelly Rolls"/>
    <property type="match status" value="1"/>
</dbReference>
<dbReference type="HAMAP" id="MF_00334">
    <property type="entry name" value="Homogentis_dioxygen"/>
    <property type="match status" value="1"/>
</dbReference>
<dbReference type="InterPro" id="IPR046451">
    <property type="entry name" value="HgmA_C"/>
</dbReference>
<dbReference type="InterPro" id="IPR046452">
    <property type="entry name" value="HgmA_N"/>
</dbReference>
<dbReference type="InterPro" id="IPR005708">
    <property type="entry name" value="Homogentis_dOase"/>
</dbReference>
<dbReference type="InterPro" id="IPR022950">
    <property type="entry name" value="Homogentis_dOase_bac"/>
</dbReference>
<dbReference type="InterPro" id="IPR014710">
    <property type="entry name" value="RmlC-like_jellyroll"/>
</dbReference>
<dbReference type="InterPro" id="IPR011051">
    <property type="entry name" value="RmlC_Cupin_sf"/>
</dbReference>
<dbReference type="NCBIfam" id="TIGR01015">
    <property type="entry name" value="hmgA"/>
    <property type="match status" value="1"/>
</dbReference>
<dbReference type="PANTHER" id="PTHR11056">
    <property type="entry name" value="HOMOGENTISATE 1,2-DIOXYGENASE"/>
    <property type="match status" value="1"/>
</dbReference>
<dbReference type="PANTHER" id="PTHR11056:SF0">
    <property type="entry name" value="HOMOGENTISATE 1,2-DIOXYGENASE"/>
    <property type="match status" value="1"/>
</dbReference>
<dbReference type="Pfam" id="PF04209">
    <property type="entry name" value="HgmA_C"/>
    <property type="match status" value="1"/>
</dbReference>
<dbReference type="Pfam" id="PF20510">
    <property type="entry name" value="HgmA_N"/>
    <property type="match status" value="1"/>
</dbReference>
<dbReference type="SUPFAM" id="SSF51182">
    <property type="entry name" value="RmlC-like cupins"/>
    <property type="match status" value="1"/>
</dbReference>
<name>HGD_NITHX</name>
<feature type="chain" id="PRO_1000019531" description="Homogentisate 1,2-dioxygenase">
    <location>
        <begin position="1"/>
        <end position="448"/>
    </location>
</feature>
<feature type="active site" description="Proton acceptor" evidence="1">
    <location>
        <position position="303"/>
    </location>
</feature>
<feature type="binding site" evidence="1">
    <location>
        <position position="346"/>
    </location>
    <ligand>
        <name>Fe cation</name>
        <dbReference type="ChEBI" id="CHEBI:24875"/>
    </ligand>
</feature>
<feature type="binding site" evidence="1">
    <location>
        <position position="352"/>
    </location>
    <ligand>
        <name>Fe cation</name>
        <dbReference type="ChEBI" id="CHEBI:24875"/>
    </ligand>
</feature>
<feature type="binding site" evidence="1">
    <location>
        <position position="361"/>
    </location>
    <ligand>
        <name>homogentisate</name>
        <dbReference type="ChEBI" id="CHEBI:16169"/>
    </ligand>
</feature>
<feature type="binding site" evidence="1">
    <location>
        <position position="382"/>
    </location>
    <ligand>
        <name>Fe cation</name>
        <dbReference type="ChEBI" id="CHEBI:24875"/>
    </ligand>
</feature>
<feature type="binding site" evidence="1">
    <location>
        <position position="382"/>
    </location>
    <ligand>
        <name>homogentisate</name>
        <dbReference type="ChEBI" id="CHEBI:16169"/>
    </ligand>
</feature>
<accession>Q1QPR8</accession>
<keyword id="KW-0223">Dioxygenase</keyword>
<keyword id="KW-0408">Iron</keyword>
<keyword id="KW-0479">Metal-binding</keyword>
<keyword id="KW-0560">Oxidoreductase</keyword>
<keyword id="KW-0585">Phenylalanine catabolism</keyword>
<keyword id="KW-1185">Reference proteome</keyword>
<keyword id="KW-0828">Tyrosine catabolism</keyword>